<accession>Q15744</accession>
<accession>Q15745</accession>
<accession>Q8IYI2</accession>
<accession>Q99803</accession>
<comment type="function">
    <text evidence="5 8">Transcriptional activator (PubMed:26019275). C/EBP are DNA-binding proteins that recognize two different motifs: the CCAAT homology common to many promoters and the enhanced core homology common to many enhancers. Required for the promyelocyte-myelocyte transition in myeloid differentiation (PubMed:10359588).</text>
</comment>
<comment type="subunit">
    <text evidence="1 8 9">Binds DNA as a homodimer and as a heterodimer (PubMed:26019275). Can form stable heterodimers with CEBPA, CEBPB and CEBPD (By similarity). Interacts with GATA1 and SPI1 (PubMed:26019275). Interacts with SMARCD2 (PubMed:28369036).</text>
</comment>
<comment type="interaction">
    <interactant intactId="EBI-3907048">
        <id>Q15744</id>
    </interactant>
    <interactant intactId="EBI-712767">
        <id>P18847</id>
        <label>ATF3</label>
    </interactant>
    <organismsDiffer>false</organismsDiffer>
    <experiments>2</experiments>
</comment>
<comment type="interaction">
    <interactant intactId="EBI-3907048">
        <id>Q15744</id>
    </interactant>
    <interactant intactId="EBI-492498">
        <id>P18848</id>
        <label>ATF4</label>
    </interactant>
    <organismsDiffer>false</organismsDiffer>
    <experiments>2</experiments>
</comment>
<comment type="interaction">
    <interactant intactId="EBI-3907048">
        <id>Q15744</id>
    </interactant>
    <interactant intactId="EBI-749503">
        <id>Q16520</id>
        <label>BATF</label>
    </interactant>
    <organismsDiffer>false</organismsDiffer>
    <experiments>2</experiments>
</comment>
<comment type="interaction">
    <interactant intactId="EBI-3907048">
        <id>Q15744</id>
    </interactant>
    <interactant intactId="EBI-10312707">
        <id>Q9NR55</id>
        <label>BATF3</label>
    </interactant>
    <organismsDiffer>false</organismsDiffer>
    <experiments>2</experiments>
</comment>
<comment type="interaction">
    <interactant intactId="EBI-3907048">
        <id>Q15744</id>
    </interactant>
    <interactant intactId="EBI-1172054">
        <id>P49715</id>
        <label>CEBPA</label>
    </interactant>
    <organismsDiffer>false</organismsDiffer>
    <experiments>2</experiments>
</comment>
<comment type="interaction">
    <interactant intactId="EBI-3907048">
        <id>Q15744</id>
    </interactant>
    <interactant intactId="EBI-740209">
        <id>P53567</id>
        <label>CEBPG</label>
    </interactant>
    <organismsDiffer>false</organismsDiffer>
    <experiments>2</experiments>
</comment>
<comment type="interaction">
    <interactant intactId="EBI-3907048">
        <id>Q15744</id>
    </interactant>
    <interactant intactId="EBI-742651">
        <id>P35638</id>
        <label>DDIT3</label>
    </interactant>
    <organismsDiffer>false</organismsDiffer>
    <experiments>3</experiments>
</comment>
<comment type="subcellular location">
    <subcellularLocation>
        <location evidence="6 8">Nucleus</location>
    </subcellularLocation>
</comment>
<comment type="tissue specificity">
    <text evidence="13">Strongest expression occurs in promyelocyte and late-myeloblast-like cell lines.</text>
</comment>
<comment type="PTM">
    <text>Phosphorylated.</text>
</comment>
<comment type="disease" evidence="5 6 7 8 10 12">
    <disease id="DI-04999">
        <name>Specific granule deficiency 1</name>
        <acronym>SGD1</acronym>
        <description>An immunologic disorder characterized by recurrent pyogenic infections, defective neutrophil chemotaxis and bactericidal activity, and lack of neutrophil secondary granule proteins. Neutrophils of affected individuals lack lactoferrin and show abnormal nuclear segmentation, bilobed nuclei, low alkaline phosphatase, and increased number of neutrophil mitochondria and ribosomes. SGD1 inheritance can be autosomal dominant or recessive.</description>
        <dbReference type="MIM" id="245480"/>
    </disease>
    <text>The disease is caused by variants affecting the gene represented in this entry.</text>
</comment>
<comment type="disease" evidence="11">
    <disease id="DI-06512">
        <name>Immunodeficiency 108 with autoinflammation</name>
        <acronym>IMD108</acronym>
        <description>An autosomal recessive disorder characterized by autoinflammation and immune impairment of neutrophils, manifesting around adolescence. Affected individuals have recurrent episodes of abdominal pain associated with fever and elevated inflammatory markers. Additional features include recurrent infections, particularly of the skin and nails, poor wound healing, and mild bleeding tendencies.</description>
        <dbReference type="MIM" id="260570"/>
    </disease>
    <text>The disease is caused by variants affecting the gene represented in this entry.</text>
</comment>
<comment type="similarity">
    <text evidence="14">Belongs to the bZIP family. C/EBP subfamily.</text>
</comment>
<comment type="sequence caution" evidence="14">
    <conflict type="frameshift">
        <sequence resource="EMBL-CDS" id="AAC51130"/>
    </conflict>
</comment>
<comment type="online information" name="CEBPEbase">
    <link uri="https://databases.lovd.nl/shared/genes/CEBPE"/>
    <text>CEBPE mutation db</text>
</comment>
<evidence type="ECO:0000250" key="1">
    <source>
        <dbReference type="UniProtKB" id="P56261"/>
    </source>
</evidence>
<evidence type="ECO:0000250" key="2">
    <source>
        <dbReference type="UniProtKB" id="Q6PZD9"/>
    </source>
</evidence>
<evidence type="ECO:0000255" key="3">
    <source>
        <dbReference type="PROSITE-ProRule" id="PRU00978"/>
    </source>
</evidence>
<evidence type="ECO:0000256" key="4">
    <source>
        <dbReference type="SAM" id="MobiDB-lite"/>
    </source>
</evidence>
<evidence type="ECO:0000269" key="5">
    <source>
    </source>
</evidence>
<evidence type="ECO:0000269" key="6">
    <source>
    </source>
</evidence>
<evidence type="ECO:0000269" key="7">
    <source>
    </source>
</evidence>
<evidence type="ECO:0000269" key="8">
    <source>
    </source>
</evidence>
<evidence type="ECO:0000269" key="9">
    <source>
    </source>
</evidence>
<evidence type="ECO:0000269" key="10">
    <source>
    </source>
</evidence>
<evidence type="ECO:0000269" key="11">
    <source>
    </source>
</evidence>
<evidence type="ECO:0000269" key="12">
    <source>
    </source>
</evidence>
<evidence type="ECO:0000269" key="13">
    <source>
    </source>
</evidence>
<evidence type="ECO:0000305" key="14"/>
<evidence type="ECO:0007744" key="15">
    <source>
    </source>
</evidence>
<evidence type="ECO:0007829" key="16">
    <source>
        <dbReference type="PDB" id="3T92"/>
    </source>
</evidence>
<name>CEBPE_HUMAN</name>
<protein>
    <recommendedName>
        <fullName>CCAAT/enhancer-binding protein epsilon</fullName>
        <shortName>C/EBP epsilon</shortName>
    </recommendedName>
</protein>
<feature type="chain" id="PRO_0000076624" description="CCAAT/enhancer-binding protein epsilon">
    <location>
        <begin position="1"/>
        <end position="281"/>
    </location>
</feature>
<feature type="domain" description="bZIP" evidence="3">
    <location>
        <begin position="204"/>
        <end position="267"/>
    </location>
</feature>
<feature type="region of interest" description="Disordered" evidence="4">
    <location>
        <begin position="1"/>
        <end position="30"/>
    </location>
</feature>
<feature type="region of interest" description="Basic motif" evidence="3">
    <location>
        <begin position="208"/>
        <end position="228"/>
    </location>
</feature>
<feature type="region of interest" description="Leucine-zipper" evidence="3">
    <location>
        <begin position="230"/>
        <end position="237"/>
    </location>
</feature>
<feature type="modified residue" description="Phosphoserine" evidence="2">
    <location>
        <position position="181"/>
    </location>
</feature>
<feature type="cross-link" description="Glycyl lysine isopeptide (Lys-Gly) (interchain with G-Cter in SUMO2)" evidence="15">
    <location>
        <position position="121"/>
    </location>
</feature>
<feature type="sequence variant" id="VAR_087819" description="In SGD1." evidence="12">
    <location>
        <begin position="135"/>
        <end position="281"/>
    </location>
</feature>
<feature type="sequence variant" id="VAR_087820" description="In SGD1; dbSNP:rs747524697." evidence="7 10">
    <original>V</original>
    <variation>A</variation>
    <location>
        <position position="218"/>
    </location>
</feature>
<feature type="sequence variant" id="VAR_087821" description="In IMD108; gain-of-function variant resulting in increased DNA-binding transcription factor activity and decreased association with transcriptional repressors." evidence="11">
    <original>R</original>
    <variation>H</variation>
    <location>
        <position position="219"/>
    </location>
</feature>
<feature type="sequence variant" id="VAR_078996" description="In SGD1; decreased function in positive regulation of DNA-templated transcription; loss of interaction with GATA1; decreased interaction with SPI1; no effect on localization to nucleus; no effect on DNA binding; no effect on dimerization." evidence="8">
    <location>
        <begin position="248"/>
        <end position="249"/>
    </location>
</feature>
<feature type="sequence conflict" description="In Ref. 2; AAC51130." evidence="14" ref="2">
    <original>P</original>
    <variation>S</variation>
    <location>
        <position position="64"/>
    </location>
</feature>
<feature type="sequence conflict" description="In Ref. 1; AAC50708/AAC50709." evidence="14" ref="1">
    <original>G</original>
    <variation>R</variation>
    <location>
        <position position="68"/>
    </location>
</feature>
<feature type="sequence conflict" description="In Ref. 2; AAC51130." evidence="14" ref="2">
    <original>Q</original>
    <variation>E</variation>
    <location>
        <position position="252"/>
    </location>
</feature>
<feature type="helix" evidence="16">
    <location>
        <begin position="37"/>
        <end position="47"/>
    </location>
</feature>
<feature type="helix" evidence="16">
    <location>
        <begin position="50"/>
        <end position="57"/>
    </location>
</feature>
<organism>
    <name type="scientific">Homo sapiens</name>
    <name type="common">Human</name>
    <dbReference type="NCBI Taxonomy" id="9606"/>
    <lineage>
        <taxon>Eukaryota</taxon>
        <taxon>Metazoa</taxon>
        <taxon>Chordata</taxon>
        <taxon>Craniata</taxon>
        <taxon>Vertebrata</taxon>
        <taxon>Euteleostomi</taxon>
        <taxon>Mammalia</taxon>
        <taxon>Eutheria</taxon>
        <taxon>Euarchontoglires</taxon>
        <taxon>Primates</taxon>
        <taxon>Haplorrhini</taxon>
        <taxon>Catarrhini</taxon>
        <taxon>Hominidae</taxon>
        <taxon>Homo</taxon>
    </lineage>
</organism>
<proteinExistence type="evidence at protein level"/>
<gene>
    <name type="primary">CEBPE</name>
</gene>
<sequence length="281" mass="30603">MSHGTYYECEPRGGQQPLEFSGGRAGPGELGDMCEHEASIDLSAYIESGEEQLLSDLFAVKPAPEARGLKGPGTPAFPHYLPPDPRPFAYPPHTFGPDRKALGPGIYSSPGSYDPRAVAVKEEPRGPEGSRAASRGSYNPLQYQVAHCGQTAMHLPPTLAAPGQPLRVLKAPLATAAPPCSPLLKAPSPAGPLHKGKKAVNKDSLEYRLRRERNNIAVRKSRDKAKRRILETQQKVLEYMAENERLRSRVEQLTQELDTLRNLFRQIPEAANLIKGVGGCS</sequence>
<keyword id="KW-0002">3D-structure</keyword>
<keyword id="KW-0010">Activator</keyword>
<keyword id="KW-0225">Disease variant</keyword>
<keyword id="KW-0238">DNA-binding</keyword>
<keyword id="KW-1017">Isopeptide bond</keyword>
<keyword id="KW-0539">Nucleus</keyword>
<keyword id="KW-0597">Phosphoprotein</keyword>
<keyword id="KW-1267">Proteomics identification</keyword>
<keyword id="KW-1185">Reference proteome</keyword>
<keyword id="KW-0804">Transcription</keyword>
<keyword id="KW-0805">Transcription regulation</keyword>
<keyword id="KW-0832">Ubl conjugation</keyword>
<reference key="1">
    <citation type="journal article" date="1996" name="Genomics">
        <title>A novel human CCAAT/enhancer binding protein gene, C/EBPepsilon, is expressed in cells of lymphoid and myeloid lineages and is localized on chromosome 14q11.2 close to the T-cell receptor alpha/delta locus.</title>
        <authorList>
            <person name="Antonson P."/>
            <person name="Stellan B."/>
            <person name="Yamanaka R."/>
            <person name="Xanthopoulos K.G."/>
        </authorList>
    </citation>
    <scope>NUCLEOTIDE SEQUENCE [GENOMIC DNA / MRNA]</scope>
</reference>
<reference key="2">
    <citation type="journal article" date="1997" name="Mol. Cell. Biol.">
        <title>Cloning of the novel human myeloid-cell-specific C/EBP-epsilon transcription factor.</title>
        <authorList>
            <person name="Chumakov A.M."/>
            <person name="Grillier I."/>
            <person name="Chumakova E."/>
            <person name="Chih D."/>
            <person name="Slater J."/>
            <person name="Koeffler H.P."/>
        </authorList>
    </citation>
    <scope>NUCLEOTIDE SEQUENCE [GENOMIC DNA]</scope>
    <scope>TISSUE SPECIFICITY</scope>
    <scope>CHARACTERIZATION</scope>
</reference>
<reference key="3">
    <citation type="journal article" date="2004" name="Genome Res.">
        <title>The status, quality, and expansion of the NIH full-length cDNA project: the Mammalian Gene Collection (MGC).</title>
        <authorList>
            <consortium name="The MGC Project Team"/>
        </authorList>
    </citation>
    <scope>NUCLEOTIDE SEQUENCE [LARGE SCALE MRNA]</scope>
    <source>
        <tissue>Brain</tissue>
    </source>
</reference>
<reference key="4">
    <citation type="journal article" date="1999" name="J. Exp. Med.">
        <title>Neutrophil-specific granule deficiency results from a novel mutation with loss of function of the transcription factor CCAAT/enhancer binding protein epsilon.</title>
        <authorList>
            <person name="Lekstrom-Himes J.A."/>
            <person name="Dorman S.E."/>
            <person name="Kopar P."/>
            <person name="Holland S.M."/>
            <person name="Gallin J.I."/>
        </authorList>
    </citation>
    <scope>FUNCTION</scope>
    <scope>INVOLVEMENT IN SGD1</scope>
</reference>
<reference key="5">
    <citation type="journal article" date="2001" name="Blood">
        <title>Neutrophil-specific granule deficiency: homozygous recessive inheritance of a frameshift mutation in the gene encoding transcription factor CCAAT/enhancer binding protein--epsilon.</title>
        <authorList>
            <person name="Gombart A.F."/>
            <person name="Shiohara M."/>
            <person name="Kwok S.H."/>
            <person name="Agematsu K."/>
            <person name="Komiyama A."/>
            <person name="Koeffler H.P."/>
        </authorList>
    </citation>
    <scope>SUBCELLULAR LOCATION</scope>
    <scope>INVOLVEMENT IN SGD1</scope>
</reference>
<reference key="6">
    <citation type="journal article" date="2015" name="J. Immunol.">
        <title>A novel in-frame deletion in the leucine zipper domain of C/EBPepsilon leads to neutrophil-specific granule deficiency.</title>
        <authorList>
            <person name="Wada T."/>
            <person name="Akagi T."/>
            <person name="Muraoka M."/>
            <person name="Toma T."/>
            <person name="Kaji K."/>
            <person name="Agematsu K."/>
            <person name="Koeffler H.P."/>
            <person name="Yokota T."/>
            <person name="Yachie A."/>
        </authorList>
    </citation>
    <scope>FUNCTION</scope>
    <scope>SUBCELLULAR LOCATION</scope>
    <scope>SUBUNIT</scope>
    <scope>INTERACTION WITH GATA1 AND SPI1</scope>
    <scope>VARIANT SGD1 248-SER-ARG-249 DEL</scope>
    <scope>CHARACTERIZATION OF VARIANT SGD1 248-SER-ARG-249 DEL</scope>
</reference>
<reference key="7">
    <citation type="journal article" date="2017" name="Nat. Genet.">
        <title>Chromatin-remodeling factor SMARCD2 regulates transcriptional networks controlling differentiation of neutrophil granulocytes.</title>
        <authorList>
            <person name="Witzel M."/>
            <person name="Petersheim D."/>
            <person name="Fan Y."/>
            <person name="Bahrami E."/>
            <person name="Racek T."/>
            <person name="Rohlfs M."/>
            <person name="Puchalka J."/>
            <person name="Mertes C."/>
            <person name="Gagneur J."/>
            <person name="Ziegenhain C."/>
            <person name="Enard W."/>
            <person name="Stray-Pedersen A."/>
            <person name="Arkwright P.D."/>
            <person name="Abboud M.R."/>
            <person name="Pazhakh V."/>
            <person name="Lieschke G.J."/>
            <person name="Krawitz P.M."/>
            <person name="Dahlhoff M."/>
            <person name="Schneider M.R."/>
            <person name="Wolf E."/>
            <person name="Horny H.P."/>
            <person name="Schmidt H."/>
            <person name="Schaeffer A.A."/>
            <person name="Klein C."/>
        </authorList>
    </citation>
    <scope>INTERACTION WITH SMARCD2</scope>
</reference>
<reference key="8">
    <citation type="journal article" date="2017" name="Nat. Struct. Mol. Biol.">
        <title>Site-specific mapping of the human SUMO proteome reveals co-modification with phosphorylation.</title>
        <authorList>
            <person name="Hendriks I.A."/>
            <person name="Lyon D."/>
            <person name="Young C."/>
            <person name="Jensen L.J."/>
            <person name="Vertegaal A.C."/>
            <person name="Nielsen M.L."/>
        </authorList>
    </citation>
    <scope>SUMOYLATION [LARGE SCALE ANALYSIS] AT LYS-121</scope>
    <scope>IDENTIFICATION BY MASS SPECTROMETRY [LARGE SCALE ANALYSIS]</scope>
</reference>
<reference key="9">
    <citation type="journal article" date="2019" name="J. Allergy Clin. Immunol.">
        <title>Gain-of-function CEBPE mutation causes noncanonical autoinflammatory inflammasomopathy.</title>
        <authorList>
            <person name="Goeoes H."/>
            <person name="Fogarty C.L."/>
            <person name="Sahu B."/>
            <person name="Plagnol V."/>
            <person name="Rajamaeki K."/>
            <person name="Nurmi K."/>
            <person name="Liu X."/>
            <person name="Einarsdottir E."/>
            <person name="Jouppila A."/>
            <person name="Pettersson T."/>
            <person name="Vihinen H."/>
            <person name="Krjutskov K."/>
            <person name="Saavalainen P."/>
            <person name="Jaervinen A."/>
            <person name="Muurinen M."/>
            <person name="Greco D."/>
            <person name="Scala G."/>
            <person name="Curtis J."/>
            <person name="Nordstroem D."/>
            <person name="Flaumenhaft R."/>
            <person name="Vaarala O."/>
            <person name="Kovanen P.E."/>
            <person name="Keskitalo S."/>
            <person name="Ranki A."/>
            <person name="Kere J."/>
            <person name="Lehto M."/>
            <person name="Notarangelo L.D."/>
            <person name="Nejentsev S."/>
            <person name="Eklund K.K."/>
            <person name="Varjosalo M."/>
            <person name="Taipale J."/>
            <person name="Seppaenen M.R.J."/>
        </authorList>
    </citation>
    <scope>INVOLVEMENT IN IMD108</scope>
    <scope>VARIANT IMD108 HIS-219</scope>
    <scope>CHARACTERIZATION OF VARIANT IMD108 HIS-219</scope>
</reference>
<reference key="10">
    <citation type="journal article" date="2007" name="Blood">
        <title>Growth factor independence-1 (Gfi-1) plays a role in mediating specific granule deficiency (SGD) in a patient lacking a gene-inactivating mutation in the C/EBPepsilon gene.</title>
        <authorList>
            <person name="Khanna-Gupta A."/>
            <person name="Sun H."/>
            <person name="Zibello T."/>
            <person name="Lee H.M."/>
            <person name="Dahl R."/>
            <person name="Boxer L.A."/>
            <person name="Berliner N."/>
        </authorList>
    </citation>
    <scope>VARIANT SGD1 ALA-218</scope>
</reference>
<reference key="11">
    <citation type="journal article" date="2018" name="Front. Immunol.">
        <title>CEBPE-mutant specific granule deficiency correlates with aberrant granule organization and substantial proteome alterations in neutrophils.</title>
        <authorList>
            <person name="Serwas N.K."/>
            <person name="Huemer J."/>
            <person name="Dieckmann R."/>
            <person name="Mejstrikova E."/>
            <person name="Garncarz W."/>
            <person name="Litzman J."/>
            <person name="Hoeger B."/>
            <person name="Zapletal O."/>
            <person name="Janda A."/>
            <person name="Bennett K.L."/>
            <person name="Kain R."/>
            <person name="Kerjaschky D."/>
            <person name="Boztug K."/>
        </authorList>
    </citation>
    <scope>VARIANT SGD1 ALA-218</scope>
</reference>
<reference key="12">
    <citation type="journal article" date="2020" name="Front. Pediatr.">
        <title>Brain Abscess as Severe Presentation of Specific Granule Deficiency.</title>
        <authorList>
            <person name="Leszcynska M."/>
            <person name="Patel B."/>
            <person name="Morrow M."/>
            <person name="Chamizo W."/>
            <person name="Tuite G."/>
            <person name="Berman D.M."/>
            <person name="Potthast K."/>
            <person name="Hsu A.P."/>
            <person name="Holland S.M."/>
            <person name="Leiding J.W."/>
        </authorList>
    </citation>
    <scope>VARIANT SGD1 135-ARG--SER-281 DEL</scope>
</reference>
<dbReference type="EMBL" id="U48865">
    <property type="protein sequence ID" value="AAC50708.1"/>
    <property type="molecule type" value="Genomic_DNA"/>
</dbReference>
<dbReference type="EMBL" id="U48866">
    <property type="protein sequence ID" value="AAC50709.1"/>
    <property type="molecule type" value="mRNA"/>
</dbReference>
<dbReference type="EMBL" id="U80982">
    <property type="protein sequence ID" value="AAC51130.1"/>
    <property type="status" value="ALT_FRAME"/>
    <property type="molecule type" value="Genomic_DNA"/>
</dbReference>
<dbReference type="EMBL" id="BC035797">
    <property type="protein sequence ID" value="AAH35797.2"/>
    <property type="molecule type" value="mRNA"/>
</dbReference>
<dbReference type="CCDS" id="CCDS9589.1"/>
<dbReference type="RefSeq" id="NP_001796.2">
    <property type="nucleotide sequence ID" value="NM_001805.3"/>
</dbReference>
<dbReference type="PDB" id="3T92">
    <property type="method" value="X-ray"/>
    <property type="resolution" value="1.50 A"/>
    <property type="chains" value="A=37-61"/>
</dbReference>
<dbReference type="PDBsum" id="3T92"/>
<dbReference type="SMR" id="Q15744"/>
<dbReference type="BioGRID" id="107482">
    <property type="interactions" value="59"/>
</dbReference>
<dbReference type="ComplexPortal" id="CPX-6472">
    <property type="entry name" value="bZIP transcription factor complex, ATF3-CEBPE"/>
</dbReference>
<dbReference type="ComplexPortal" id="CPX-6529">
    <property type="entry name" value="bZIP transcription factor complex, ATF4-CEBPE"/>
</dbReference>
<dbReference type="ComplexPortal" id="CPX-6589">
    <property type="entry name" value="bZIP transcription factor complex, ATF5-CEBPE"/>
</dbReference>
<dbReference type="ComplexPortal" id="CPX-7010">
    <property type="entry name" value="bZIP transcription factor complex, BATF-CEBPE"/>
</dbReference>
<dbReference type="ComplexPortal" id="CPX-7067">
    <property type="entry name" value="bZIP transcription factor complex, BATF2-CEBPE"/>
</dbReference>
<dbReference type="ComplexPortal" id="CPX-7099">
    <property type="entry name" value="bZIP transcription factor complex, BATF3-CEBPE"/>
</dbReference>
<dbReference type="ComplexPortal" id="CPX-912">
    <property type="entry name" value="bZIP transcription factor complex, CEBPE-CEBPE"/>
</dbReference>
<dbReference type="CORUM" id="Q15744"/>
<dbReference type="ELM" id="Q15744"/>
<dbReference type="FunCoup" id="Q15744">
    <property type="interactions" value="679"/>
</dbReference>
<dbReference type="IntAct" id="Q15744">
    <property type="interactions" value="32"/>
</dbReference>
<dbReference type="MINT" id="Q15744"/>
<dbReference type="STRING" id="9606.ENSP00000206513"/>
<dbReference type="GlyGen" id="Q15744">
    <property type="glycosylation" value="1 site, 1 O-linked glycan (1 site)"/>
</dbReference>
<dbReference type="iPTMnet" id="Q15744"/>
<dbReference type="PhosphoSitePlus" id="Q15744"/>
<dbReference type="BioMuta" id="CEBPE"/>
<dbReference type="DMDM" id="62512175"/>
<dbReference type="MassIVE" id="Q15744"/>
<dbReference type="PaxDb" id="9606-ENSP00000206513"/>
<dbReference type="PeptideAtlas" id="Q15744"/>
<dbReference type="ProteomicsDB" id="60732"/>
<dbReference type="Antibodypedia" id="150">
    <property type="antibodies" value="382 antibodies from 31 providers"/>
</dbReference>
<dbReference type="DNASU" id="1053"/>
<dbReference type="Ensembl" id="ENST00000206513.6">
    <property type="protein sequence ID" value="ENSP00000206513.5"/>
    <property type="gene ID" value="ENSG00000092067.7"/>
</dbReference>
<dbReference type="GeneID" id="1053"/>
<dbReference type="KEGG" id="hsa:1053"/>
<dbReference type="MANE-Select" id="ENST00000206513.6">
    <property type="protein sequence ID" value="ENSP00000206513.5"/>
    <property type="RefSeq nucleotide sequence ID" value="NM_001805.4"/>
    <property type="RefSeq protein sequence ID" value="NP_001796.2"/>
</dbReference>
<dbReference type="UCSC" id="uc001wiv.3">
    <property type="organism name" value="human"/>
</dbReference>
<dbReference type="AGR" id="HGNC:1836"/>
<dbReference type="CTD" id="1053"/>
<dbReference type="DisGeNET" id="1053"/>
<dbReference type="GeneCards" id="CEBPE"/>
<dbReference type="HGNC" id="HGNC:1836">
    <property type="gene designation" value="CEBPE"/>
</dbReference>
<dbReference type="HPA" id="ENSG00000092067">
    <property type="expression patterns" value="Tissue enriched (bone)"/>
</dbReference>
<dbReference type="MalaCards" id="CEBPE"/>
<dbReference type="MIM" id="245480">
    <property type="type" value="phenotype"/>
</dbReference>
<dbReference type="MIM" id="260570">
    <property type="type" value="phenotype"/>
</dbReference>
<dbReference type="MIM" id="600749">
    <property type="type" value="gene"/>
</dbReference>
<dbReference type="neXtProt" id="NX_Q15744"/>
<dbReference type="OpenTargets" id="ENSG00000092067"/>
<dbReference type="Orphanet" id="566067">
    <property type="disease" value="CEBPE-associated autoinflammation-immunodeficiency-neutrophil dysfunction syndrome"/>
</dbReference>
<dbReference type="Orphanet" id="169142">
    <property type="disease" value="Recurrent infections due to specific granule deficiency"/>
</dbReference>
<dbReference type="PharmGKB" id="PA26379"/>
<dbReference type="VEuPathDB" id="HostDB:ENSG00000092067"/>
<dbReference type="eggNOG" id="KOG3119">
    <property type="taxonomic scope" value="Eukaryota"/>
</dbReference>
<dbReference type="GeneTree" id="ENSGT00940000161681"/>
<dbReference type="HOGENOM" id="CLU_043327_0_0_1"/>
<dbReference type="InParanoid" id="Q15744"/>
<dbReference type="OMA" id="CDHEASI"/>
<dbReference type="OrthoDB" id="10032067at2759"/>
<dbReference type="PAN-GO" id="Q15744">
    <property type="GO annotations" value="4 GO annotations based on evolutionary models"/>
</dbReference>
<dbReference type="PhylomeDB" id="Q15744"/>
<dbReference type="TreeFam" id="TF105008"/>
<dbReference type="PathwayCommons" id="Q15744"/>
<dbReference type="Reactome" id="R-HSA-9616222">
    <property type="pathway name" value="Transcriptional regulation of granulopoiesis"/>
</dbReference>
<dbReference type="SignaLink" id="Q15744"/>
<dbReference type="SIGNOR" id="Q15744"/>
<dbReference type="BioGRID-ORCS" id="1053">
    <property type="hits" value="41 hits in 1173 CRISPR screens"/>
</dbReference>
<dbReference type="EvolutionaryTrace" id="Q15744"/>
<dbReference type="GeneWiki" id="CEBPE"/>
<dbReference type="GenomeRNAi" id="1053"/>
<dbReference type="Pharos" id="Q15744">
    <property type="development level" value="Tbio"/>
</dbReference>
<dbReference type="PRO" id="PR:Q15744"/>
<dbReference type="Proteomes" id="UP000005640">
    <property type="component" value="Chromosome 14"/>
</dbReference>
<dbReference type="RNAct" id="Q15744">
    <property type="molecule type" value="protein"/>
</dbReference>
<dbReference type="Bgee" id="ENSG00000092067">
    <property type="expression patterns" value="Expressed in bone marrow and 84 other cell types or tissues"/>
</dbReference>
<dbReference type="GO" id="GO:0000785">
    <property type="term" value="C:chromatin"/>
    <property type="evidence" value="ECO:0000247"/>
    <property type="project" value="NTNU_SB"/>
</dbReference>
<dbReference type="GO" id="GO:0005654">
    <property type="term" value="C:nucleoplasm"/>
    <property type="evidence" value="ECO:0000314"/>
    <property type="project" value="HPA"/>
</dbReference>
<dbReference type="GO" id="GO:0005634">
    <property type="term" value="C:nucleus"/>
    <property type="evidence" value="ECO:0000314"/>
    <property type="project" value="UniProtKB"/>
</dbReference>
<dbReference type="GO" id="GO:0005886">
    <property type="term" value="C:plasma membrane"/>
    <property type="evidence" value="ECO:0000314"/>
    <property type="project" value="HPA"/>
</dbReference>
<dbReference type="GO" id="GO:0090575">
    <property type="term" value="C:RNA polymerase II transcription regulator complex"/>
    <property type="evidence" value="ECO:0000353"/>
    <property type="project" value="ComplexPortal"/>
</dbReference>
<dbReference type="GO" id="GO:0001228">
    <property type="term" value="F:DNA-binding transcription activator activity, RNA polymerase II-specific"/>
    <property type="evidence" value="ECO:0000314"/>
    <property type="project" value="NTNU_SB"/>
</dbReference>
<dbReference type="GO" id="GO:0000981">
    <property type="term" value="F:DNA-binding transcription factor activity, RNA polymerase II-specific"/>
    <property type="evidence" value="ECO:0000247"/>
    <property type="project" value="NTNU_SB"/>
</dbReference>
<dbReference type="GO" id="GO:0042802">
    <property type="term" value="F:identical protein binding"/>
    <property type="evidence" value="ECO:0007669"/>
    <property type="project" value="Ensembl"/>
</dbReference>
<dbReference type="GO" id="GO:0044877">
    <property type="term" value="F:protein-containing complex binding"/>
    <property type="evidence" value="ECO:0007669"/>
    <property type="project" value="Ensembl"/>
</dbReference>
<dbReference type="GO" id="GO:0000978">
    <property type="term" value="F:RNA polymerase II cis-regulatory region sequence-specific DNA binding"/>
    <property type="evidence" value="ECO:0000314"/>
    <property type="project" value="NTNU_SB"/>
</dbReference>
<dbReference type="GO" id="GO:1990837">
    <property type="term" value="F:sequence-specific double-stranded DNA binding"/>
    <property type="evidence" value="ECO:0000314"/>
    <property type="project" value="ARUK-UCL"/>
</dbReference>
<dbReference type="GO" id="GO:0071222">
    <property type="term" value="P:cellular response to lipopolysaccharide"/>
    <property type="evidence" value="ECO:0007669"/>
    <property type="project" value="Ensembl"/>
</dbReference>
<dbReference type="GO" id="GO:0006952">
    <property type="term" value="P:defense response"/>
    <property type="evidence" value="ECO:0000304"/>
    <property type="project" value="ProtInc"/>
</dbReference>
<dbReference type="GO" id="GO:0006351">
    <property type="term" value="P:DNA-templated transcription"/>
    <property type="evidence" value="ECO:0007669"/>
    <property type="project" value="InterPro"/>
</dbReference>
<dbReference type="GO" id="GO:0030851">
    <property type="term" value="P:granulocyte differentiation"/>
    <property type="evidence" value="ECO:0000315"/>
    <property type="project" value="UniProtKB"/>
</dbReference>
<dbReference type="GO" id="GO:0140467">
    <property type="term" value="P:integrated stress response signaling"/>
    <property type="evidence" value="ECO:0000303"/>
    <property type="project" value="ComplexPortal"/>
</dbReference>
<dbReference type="GO" id="GO:0030225">
    <property type="term" value="P:macrophage differentiation"/>
    <property type="evidence" value="ECO:0007669"/>
    <property type="project" value="Ensembl"/>
</dbReference>
<dbReference type="GO" id="GO:0030099">
    <property type="term" value="P:myeloid cell differentiation"/>
    <property type="evidence" value="ECO:0000318"/>
    <property type="project" value="GO_Central"/>
</dbReference>
<dbReference type="GO" id="GO:0006909">
    <property type="term" value="P:phagocytosis"/>
    <property type="evidence" value="ECO:0007669"/>
    <property type="project" value="Ensembl"/>
</dbReference>
<dbReference type="GO" id="GO:0010628">
    <property type="term" value="P:positive regulation of gene expression"/>
    <property type="evidence" value="ECO:0007669"/>
    <property type="project" value="Ensembl"/>
</dbReference>
<dbReference type="GO" id="GO:0045944">
    <property type="term" value="P:positive regulation of transcription by RNA polymerase II"/>
    <property type="evidence" value="ECO:0000314"/>
    <property type="project" value="NTNU_SB"/>
</dbReference>
<dbReference type="GO" id="GO:0006357">
    <property type="term" value="P:regulation of transcription by RNA polymerase II"/>
    <property type="evidence" value="ECO:0000318"/>
    <property type="project" value="GO_Central"/>
</dbReference>
<dbReference type="CDD" id="cd14715">
    <property type="entry name" value="bZIP_CEBPE"/>
    <property type="match status" value="1"/>
</dbReference>
<dbReference type="FunFam" id="1.20.5.170:FF:000028">
    <property type="entry name" value="CCAAT/enhancer-binding protein beta"/>
    <property type="match status" value="1"/>
</dbReference>
<dbReference type="Gene3D" id="1.20.5.170">
    <property type="match status" value="1"/>
</dbReference>
<dbReference type="IDEAL" id="IID00618"/>
<dbReference type="InterPro" id="IPR004827">
    <property type="entry name" value="bZIP"/>
</dbReference>
<dbReference type="InterPro" id="IPR046347">
    <property type="entry name" value="bZIP_sf"/>
</dbReference>
<dbReference type="InterPro" id="IPR031106">
    <property type="entry name" value="C/EBP"/>
</dbReference>
<dbReference type="InterPro" id="IPR016468">
    <property type="entry name" value="C/EBP_chordates"/>
</dbReference>
<dbReference type="PANTHER" id="PTHR23334">
    <property type="entry name" value="CCAAT/ENHANCER BINDING PROTEIN"/>
    <property type="match status" value="1"/>
</dbReference>
<dbReference type="PANTHER" id="PTHR23334:SF27">
    <property type="entry name" value="CCAAT_ENHANCER-BINDING PROTEIN EPSILON"/>
    <property type="match status" value="1"/>
</dbReference>
<dbReference type="Pfam" id="PF07716">
    <property type="entry name" value="bZIP_2"/>
    <property type="match status" value="1"/>
</dbReference>
<dbReference type="PIRSF" id="PIRSF005879">
    <property type="entry name" value="CCAAT/enhancer-binding"/>
    <property type="match status" value="1"/>
</dbReference>
<dbReference type="SMART" id="SM00338">
    <property type="entry name" value="BRLZ"/>
    <property type="match status" value="1"/>
</dbReference>
<dbReference type="SUPFAM" id="SSF57959">
    <property type="entry name" value="Leucine zipper domain"/>
    <property type="match status" value="1"/>
</dbReference>
<dbReference type="PROSITE" id="PS50217">
    <property type="entry name" value="BZIP"/>
    <property type="match status" value="1"/>
</dbReference>